<accession>A7HCV7</accession>
<protein>
    <recommendedName>
        <fullName evidence="1">tRNA-specific 2-thiouridylase MnmA</fullName>
        <ecNumber evidence="1">2.8.1.13</ecNumber>
    </recommendedName>
</protein>
<reference key="1">
    <citation type="journal article" date="2015" name="Genome Announc.">
        <title>Complete genome sequence of Anaeromyxobacter sp. Fw109-5, an anaerobic, metal-reducing bacterium isolated from a contaminated subsurface environment.</title>
        <authorList>
            <person name="Hwang C."/>
            <person name="Copeland A."/>
            <person name="Lucas S."/>
            <person name="Lapidus A."/>
            <person name="Barry K."/>
            <person name="Glavina Del Rio T."/>
            <person name="Dalin E."/>
            <person name="Tice H."/>
            <person name="Pitluck S."/>
            <person name="Sims D."/>
            <person name="Brettin T."/>
            <person name="Bruce D.C."/>
            <person name="Detter J.C."/>
            <person name="Han C.S."/>
            <person name="Schmutz J."/>
            <person name="Larimer F.W."/>
            <person name="Land M.L."/>
            <person name="Hauser L.J."/>
            <person name="Kyrpides N."/>
            <person name="Lykidis A."/>
            <person name="Richardson P."/>
            <person name="Belieav A."/>
            <person name="Sanford R.A."/>
            <person name="Loeffler F.E."/>
            <person name="Fields M.W."/>
        </authorList>
    </citation>
    <scope>NUCLEOTIDE SEQUENCE [LARGE SCALE GENOMIC DNA]</scope>
    <source>
        <strain>Fw109-5</strain>
    </source>
</reference>
<name>MNMA_ANADF</name>
<evidence type="ECO:0000255" key="1">
    <source>
        <dbReference type="HAMAP-Rule" id="MF_00144"/>
    </source>
</evidence>
<evidence type="ECO:0000256" key="2">
    <source>
        <dbReference type="SAM" id="MobiDB-lite"/>
    </source>
</evidence>
<gene>
    <name evidence="1" type="primary">mnmA</name>
    <name type="ordered locus">Anae109_2351</name>
</gene>
<organism>
    <name type="scientific">Anaeromyxobacter sp. (strain Fw109-5)</name>
    <dbReference type="NCBI Taxonomy" id="404589"/>
    <lineage>
        <taxon>Bacteria</taxon>
        <taxon>Pseudomonadati</taxon>
        <taxon>Myxococcota</taxon>
        <taxon>Myxococcia</taxon>
        <taxon>Myxococcales</taxon>
        <taxon>Cystobacterineae</taxon>
        <taxon>Anaeromyxobacteraceae</taxon>
        <taxon>Anaeromyxobacter</taxon>
    </lineage>
</organism>
<feature type="chain" id="PRO_0000349511" description="tRNA-specific 2-thiouridylase MnmA">
    <location>
        <begin position="1"/>
        <end position="349"/>
    </location>
</feature>
<feature type="region of interest" description="Interaction with tRNA" evidence="1">
    <location>
        <begin position="144"/>
        <end position="146"/>
    </location>
</feature>
<feature type="region of interest" description="Disordered" evidence="2">
    <location>
        <begin position="300"/>
        <end position="320"/>
    </location>
</feature>
<feature type="active site" description="Nucleophile" evidence="1">
    <location>
        <position position="99"/>
    </location>
</feature>
<feature type="active site" description="Cysteine persulfide intermediate" evidence="1">
    <location>
        <position position="194"/>
    </location>
</feature>
<feature type="binding site" evidence="1">
    <location>
        <begin position="6"/>
        <end position="13"/>
    </location>
    <ligand>
        <name>ATP</name>
        <dbReference type="ChEBI" id="CHEBI:30616"/>
    </ligand>
</feature>
<feature type="binding site" evidence="1">
    <location>
        <position position="32"/>
    </location>
    <ligand>
        <name>ATP</name>
        <dbReference type="ChEBI" id="CHEBI:30616"/>
    </ligand>
</feature>
<feature type="binding site" evidence="1">
    <location>
        <position position="122"/>
    </location>
    <ligand>
        <name>ATP</name>
        <dbReference type="ChEBI" id="CHEBI:30616"/>
    </ligand>
</feature>
<feature type="site" description="Interaction with tRNA" evidence="1">
    <location>
        <position position="123"/>
    </location>
</feature>
<feature type="site" description="Interaction with tRNA" evidence="1">
    <location>
        <position position="332"/>
    </location>
</feature>
<feature type="disulfide bond" description="Alternate" evidence="1">
    <location>
        <begin position="99"/>
        <end position="194"/>
    </location>
</feature>
<dbReference type="EC" id="2.8.1.13" evidence="1"/>
<dbReference type="EMBL" id="CP000769">
    <property type="protein sequence ID" value="ABS26553.1"/>
    <property type="molecule type" value="Genomic_DNA"/>
</dbReference>
<dbReference type="RefSeq" id="WP_012097140.1">
    <property type="nucleotide sequence ID" value="NC_009675.1"/>
</dbReference>
<dbReference type="SMR" id="A7HCV7"/>
<dbReference type="STRING" id="404589.Anae109_2351"/>
<dbReference type="KEGG" id="afw:Anae109_2351"/>
<dbReference type="eggNOG" id="COG0482">
    <property type="taxonomic scope" value="Bacteria"/>
</dbReference>
<dbReference type="HOGENOM" id="CLU_035188_0_0_7"/>
<dbReference type="OrthoDB" id="9800696at2"/>
<dbReference type="Proteomes" id="UP000006382">
    <property type="component" value="Chromosome"/>
</dbReference>
<dbReference type="GO" id="GO:0005737">
    <property type="term" value="C:cytoplasm"/>
    <property type="evidence" value="ECO:0007669"/>
    <property type="project" value="UniProtKB-SubCell"/>
</dbReference>
<dbReference type="GO" id="GO:0005524">
    <property type="term" value="F:ATP binding"/>
    <property type="evidence" value="ECO:0007669"/>
    <property type="project" value="UniProtKB-KW"/>
</dbReference>
<dbReference type="GO" id="GO:0000049">
    <property type="term" value="F:tRNA binding"/>
    <property type="evidence" value="ECO:0007669"/>
    <property type="project" value="UniProtKB-KW"/>
</dbReference>
<dbReference type="GO" id="GO:0103016">
    <property type="term" value="F:tRNA-uridine 2-sulfurtransferase activity"/>
    <property type="evidence" value="ECO:0007669"/>
    <property type="project" value="UniProtKB-EC"/>
</dbReference>
<dbReference type="GO" id="GO:0002143">
    <property type="term" value="P:tRNA wobble position uridine thiolation"/>
    <property type="evidence" value="ECO:0007669"/>
    <property type="project" value="TreeGrafter"/>
</dbReference>
<dbReference type="CDD" id="cd01998">
    <property type="entry name" value="MnmA_TRMU-like"/>
    <property type="match status" value="1"/>
</dbReference>
<dbReference type="Gene3D" id="2.30.30.280">
    <property type="entry name" value="Adenine nucleotide alpha hydrolases-like domains"/>
    <property type="match status" value="1"/>
</dbReference>
<dbReference type="Gene3D" id="3.40.50.620">
    <property type="entry name" value="HUPs"/>
    <property type="match status" value="1"/>
</dbReference>
<dbReference type="Gene3D" id="2.40.30.10">
    <property type="entry name" value="Translation factors"/>
    <property type="match status" value="1"/>
</dbReference>
<dbReference type="HAMAP" id="MF_00144">
    <property type="entry name" value="tRNA_thiouridyl_MnmA"/>
    <property type="match status" value="1"/>
</dbReference>
<dbReference type="InterPro" id="IPR004506">
    <property type="entry name" value="MnmA-like"/>
</dbReference>
<dbReference type="InterPro" id="IPR046885">
    <property type="entry name" value="MnmA-like_C"/>
</dbReference>
<dbReference type="InterPro" id="IPR046884">
    <property type="entry name" value="MnmA-like_central"/>
</dbReference>
<dbReference type="InterPro" id="IPR023382">
    <property type="entry name" value="MnmA-like_central_sf"/>
</dbReference>
<dbReference type="InterPro" id="IPR014729">
    <property type="entry name" value="Rossmann-like_a/b/a_fold"/>
</dbReference>
<dbReference type="NCBIfam" id="NF001138">
    <property type="entry name" value="PRK00143.1"/>
    <property type="match status" value="1"/>
</dbReference>
<dbReference type="NCBIfam" id="TIGR00420">
    <property type="entry name" value="trmU"/>
    <property type="match status" value="1"/>
</dbReference>
<dbReference type="PANTHER" id="PTHR11933:SF5">
    <property type="entry name" value="MITOCHONDRIAL TRNA-SPECIFIC 2-THIOURIDYLASE 1"/>
    <property type="match status" value="1"/>
</dbReference>
<dbReference type="PANTHER" id="PTHR11933">
    <property type="entry name" value="TRNA 5-METHYLAMINOMETHYL-2-THIOURIDYLATE -METHYLTRANSFERASE"/>
    <property type="match status" value="1"/>
</dbReference>
<dbReference type="Pfam" id="PF03054">
    <property type="entry name" value="tRNA_Me_trans"/>
    <property type="match status" value="1"/>
</dbReference>
<dbReference type="Pfam" id="PF20258">
    <property type="entry name" value="tRNA_Me_trans_C"/>
    <property type="match status" value="1"/>
</dbReference>
<dbReference type="Pfam" id="PF20259">
    <property type="entry name" value="tRNA_Me_trans_M"/>
    <property type="match status" value="1"/>
</dbReference>
<dbReference type="SUPFAM" id="SSF52402">
    <property type="entry name" value="Adenine nucleotide alpha hydrolases-like"/>
    <property type="match status" value="1"/>
</dbReference>
<proteinExistence type="inferred from homology"/>
<sequence length="349" mass="37156">MRVLVALSGGVDSSTAAALLVAEGHDVIGVSMRVADYSDARRGRSCCAPDDLEDARAAARRLDIPFYVANVEARFRERVIEPFVRDYVEGRTPNPCVACNSDVKFDWLLARARALGAKLATGHYARVERRGGRFALCRAGDPAKDQTYFLYGLGQEALRDVLFPVGDLAKRDVRAVAAQAGLPNAEKAESQEICFVTQGDAGDFVALRAPGSVRAGEIVSTAGEVLGRHDGVHRFTVGQRRGLGLAGPAPRYVVRLEPGTARVVVGSAGEASRDRFAVTEVRWIAGAPPPRPVAARVKVRHRHEGEEGTVTPDGGGGQVRLARPVRGVAPGQAAVFYDGDEVLGGGRIV</sequence>
<comment type="function">
    <text evidence="1">Catalyzes the 2-thiolation of uridine at the wobble position (U34) of tRNA, leading to the formation of s(2)U34.</text>
</comment>
<comment type="catalytic activity">
    <reaction evidence="1">
        <text>S-sulfanyl-L-cysteinyl-[protein] + uridine(34) in tRNA + AH2 + ATP = 2-thiouridine(34) in tRNA + L-cysteinyl-[protein] + A + AMP + diphosphate + H(+)</text>
        <dbReference type="Rhea" id="RHEA:47032"/>
        <dbReference type="Rhea" id="RHEA-COMP:10131"/>
        <dbReference type="Rhea" id="RHEA-COMP:11726"/>
        <dbReference type="Rhea" id="RHEA-COMP:11727"/>
        <dbReference type="Rhea" id="RHEA-COMP:11728"/>
        <dbReference type="ChEBI" id="CHEBI:13193"/>
        <dbReference type="ChEBI" id="CHEBI:15378"/>
        <dbReference type="ChEBI" id="CHEBI:17499"/>
        <dbReference type="ChEBI" id="CHEBI:29950"/>
        <dbReference type="ChEBI" id="CHEBI:30616"/>
        <dbReference type="ChEBI" id="CHEBI:33019"/>
        <dbReference type="ChEBI" id="CHEBI:61963"/>
        <dbReference type="ChEBI" id="CHEBI:65315"/>
        <dbReference type="ChEBI" id="CHEBI:87170"/>
        <dbReference type="ChEBI" id="CHEBI:456215"/>
        <dbReference type="EC" id="2.8.1.13"/>
    </reaction>
</comment>
<comment type="subcellular location">
    <subcellularLocation>
        <location evidence="1">Cytoplasm</location>
    </subcellularLocation>
</comment>
<comment type="similarity">
    <text evidence="1">Belongs to the MnmA/TRMU family.</text>
</comment>
<keyword id="KW-0067">ATP-binding</keyword>
<keyword id="KW-0963">Cytoplasm</keyword>
<keyword id="KW-1015">Disulfide bond</keyword>
<keyword id="KW-0547">Nucleotide-binding</keyword>
<keyword id="KW-1185">Reference proteome</keyword>
<keyword id="KW-0694">RNA-binding</keyword>
<keyword id="KW-0808">Transferase</keyword>
<keyword id="KW-0819">tRNA processing</keyword>
<keyword id="KW-0820">tRNA-binding</keyword>